<reference key="1">
    <citation type="journal article" date="2005" name="Science">
        <title>The transcriptional landscape of the mammalian genome.</title>
        <authorList>
            <person name="Carninci P."/>
            <person name="Kasukawa T."/>
            <person name="Katayama S."/>
            <person name="Gough J."/>
            <person name="Frith M.C."/>
            <person name="Maeda N."/>
            <person name="Oyama R."/>
            <person name="Ravasi T."/>
            <person name="Lenhard B."/>
            <person name="Wells C."/>
            <person name="Kodzius R."/>
            <person name="Shimokawa K."/>
            <person name="Bajic V.B."/>
            <person name="Brenner S.E."/>
            <person name="Batalov S."/>
            <person name="Forrest A.R."/>
            <person name="Zavolan M."/>
            <person name="Davis M.J."/>
            <person name="Wilming L.G."/>
            <person name="Aidinis V."/>
            <person name="Allen J.E."/>
            <person name="Ambesi-Impiombato A."/>
            <person name="Apweiler R."/>
            <person name="Aturaliya R.N."/>
            <person name="Bailey T.L."/>
            <person name="Bansal M."/>
            <person name="Baxter L."/>
            <person name="Beisel K.W."/>
            <person name="Bersano T."/>
            <person name="Bono H."/>
            <person name="Chalk A.M."/>
            <person name="Chiu K.P."/>
            <person name="Choudhary V."/>
            <person name="Christoffels A."/>
            <person name="Clutterbuck D.R."/>
            <person name="Crowe M.L."/>
            <person name="Dalla E."/>
            <person name="Dalrymple B.P."/>
            <person name="de Bono B."/>
            <person name="Della Gatta G."/>
            <person name="di Bernardo D."/>
            <person name="Down T."/>
            <person name="Engstrom P."/>
            <person name="Fagiolini M."/>
            <person name="Faulkner G."/>
            <person name="Fletcher C.F."/>
            <person name="Fukushima T."/>
            <person name="Furuno M."/>
            <person name="Futaki S."/>
            <person name="Gariboldi M."/>
            <person name="Georgii-Hemming P."/>
            <person name="Gingeras T.R."/>
            <person name="Gojobori T."/>
            <person name="Green R.E."/>
            <person name="Gustincich S."/>
            <person name="Harbers M."/>
            <person name="Hayashi Y."/>
            <person name="Hensch T.K."/>
            <person name="Hirokawa N."/>
            <person name="Hill D."/>
            <person name="Huminiecki L."/>
            <person name="Iacono M."/>
            <person name="Ikeo K."/>
            <person name="Iwama A."/>
            <person name="Ishikawa T."/>
            <person name="Jakt M."/>
            <person name="Kanapin A."/>
            <person name="Katoh M."/>
            <person name="Kawasawa Y."/>
            <person name="Kelso J."/>
            <person name="Kitamura H."/>
            <person name="Kitano H."/>
            <person name="Kollias G."/>
            <person name="Krishnan S.P."/>
            <person name="Kruger A."/>
            <person name="Kummerfeld S.K."/>
            <person name="Kurochkin I.V."/>
            <person name="Lareau L.F."/>
            <person name="Lazarevic D."/>
            <person name="Lipovich L."/>
            <person name="Liu J."/>
            <person name="Liuni S."/>
            <person name="McWilliam S."/>
            <person name="Madan Babu M."/>
            <person name="Madera M."/>
            <person name="Marchionni L."/>
            <person name="Matsuda H."/>
            <person name="Matsuzawa S."/>
            <person name="Miki H."/>
            <person name="Mignone F."/>
            <person name="Miyake S."/>
            <person name="Morris K."/>
            <person name="Mottagui-Tabar S."/>
            <person name="Mulder N."/>
            <person name="Nakano N."/>
            <person name="Nakauchi H."/>
            <person name="Ng P."/>
            <person name="Nilsson R."/>
            <person name="Nishiguchi S."/>
            <person name="Nishikawa S."/>
            <person name="Nori F."/>
            <person name="Ohara O."/>
            <person name="Okazaki Y."/>
            <person name="Orlando V."/>
            <person name="Pang K.C."/>
            <person name="Pavan W.J."/>
            <person name="Pavesi G."/>
            <person name="Pesole G."/>
            <person name="Petrovsky N."/>
            <person name="Piazza S."/>
            <person name="Reed J."/>
            <person name="Reid J.F."/>
            <person name="Ring B.Z."/>
            <person name="Ringwald M."/>
            <person name="Rost B."/>
            <person name="Ruan Y."/>
            <person name="Salzberg S.L."/>
            <person name="Sandelin A."/>
            <person name="Schneider C."/>
            <person name="Schoenbach C."/>
            <person name="Sekiguchi K."/>
            <person name="Semple C.A."/>
            <person name="Seno S."/>
            <person name="Sessa L."/>
            <person name="Sheng Y."/>
            <person name="Shibata Y."/>
            <person name="Shimada H."/>
            <person name="Shimada K."/>
            <person name="Silva D."/>
            <person name="Sinclair B."/>
            <person name="Sperling S."/>
            <person name="Stupka E."/>
            <person name="Sugiura K."/>
            <person name="Sultana R."/>
            <person name="Takenaka Y."/>
            <person name="Taki K."/>
            <person name="Tammoja K."/>
            <person name="Tan S.L."/>
            <person name="Tang S."/>
            <person name="Taylor M.S."/>
            <person name="Tegner J."/>
            <person name="Teichmann S.A."/>
            <person name="Ueda H.R."/>
            <person name="van Nimwegen E."/>
            <person name="Verardo R."/>
            <person name="Wei C.L."/>
            <person name="Yagi K."/>
            <person name="Yamanishi H."/>
            <person name="Zabarovsky E."/>
            <person name="Zhu S."/>
            <person name="Zimmer A."/>
            <person name="Hide W."/>
            <person name="Bult C."/>
            <person name="Grimmond S.M."/>
            <person name="Teasdale R.D."/>
            <person name="Liu E.T."/>
            <person name="Brusic V."/>
            <person name="Quackenbush J."/>
            <person name="Wahlestedt C."/>
            <person name="Mattick J.S."/>
            <person name="Hume D.A."/>
            <person name="Kai C."/>
            <person name="Sasaki D."/>
            <person name="Tomaru Y."/>
            <person name="Fukuda S."/>
            <person name="Kanamori-Katayama M."/>
            <person name="Suzuki M."/>
            <person name="Aoki J."/>
            <person name="Arakawa T."/>
            <person name="Iida J."/>
            <person name="Imamura K."/>
            <person name="Itoh M."/>
            <person name="Kato T."/>
            <person name="Kawaji H."/>
            <person name="Kawagashira N."/>
            <person name="Kawashima T."/>
            <person name="Kojima M."/>
            <person name="Kondo S."/>
            <person name="Konno H."/>
            <person name="Nakano K."/>
            <person name="Ninomiya N."/>
            <person name="Nishio T."/>
            <person name="Okada M."/>
            <person name="Plessy C."/>
            <person name="Shibata K."/>
            <person name="Shiraki T."/>
            <person name="Suzuki S."/>
            <person name="Tagami M."/>
            <person name="Waki K."/>
            <person name="Watahiki A."/>
            <person name="Okamura-Oho Y."/>
            <person name="Suzuki H."/>
            <person name="Kawai J."/>
            <person name="Hayashizaki Y."/>
        </authorList>
    </citation>
    <scope>NUCLEOTIDE SEQUENCE [LARGE SCALE MRNA]</scope>
    <source>
        <strain>BALB/cJ</strain>
        <strain>C57BL/6J</strain>
        <tissue>Spinal cord</tissue>
    </source>
</reference>
<reference key="2">
    <citation type="journal article" date="2004" name="Genome Res.">
        <title>The status, quality, and expansion of the NIH full-length cDNA project: the Mammalian Gene Collection (MGC).</title>
        <authorList>
            <consortium name="The MGC Project Team"/>
        </authorList>
    </citation>
    <scope>NUCLEOTIDE SEQUENCE [LARGE SCALE MRNA]</scope>
    <source>
        <strain>C57BL/6J</strain>
        <tissue>Thymus</tissue>
    </source>
</reference>
<reference key="3">
    <citation type="journal article" date="2008" name="Proc. Natl. Acad. Sci. U.S.A.">
        <title>The stumpy gene is required for mammalian ciliogenesis.</title>
        <authorList>
            <person name="Town T."/>
            <person name="Breunig J.J."/>
            <person name="Sarkisian M.R."/>
            <person name="Spilianakis C."/>
            <person name="Ayoub A.E."/>
            <person name="Liu X."/>
            <person name="Ferrandino A.F."/>
            <person name="Gallagher A.R."/>
            <person name="Li M.O."/>
            <person name="Rakic P."/>
            <person name="Flavell R.A."/>
        </authorList>
    </citation>
    <scope>FUNCTION</scope>
    <scope>INTERACTION WITH TUBG1</scope>
    <scope>SUBCELLULAR LOCATION</scope>
    <scope>TISSUE SPECIFICITY</scope>
    <scope>DISRUPTION PHENOTYPE</scope>
</reference>
<reference key="4">
    <citation type="journal article" date="2011" name="Am. J. Hum. Genet.">
        <title>Disruption of a ciliary B9 protein complex causes Meckel syndrome.</title>
        <authorList>
            <person name="Dowdle W.E."/>
            <person name="Robinson J.F."/>
            <person name="Kneist A."/>
            <person name="Sirerol-Piquer M.S."/>
            <person name="Frints S.G."/>
            <person name="Corbit K.C."/>
            <person name="Zaghloul N.A."/>
            <person name="van Lijnschoten G."/>
            <person name="Mulders L."/>
            <person name="Verver D.E."/>
            <person name="Zerres K."/>
            <person name="Reed R.R."/>
            <person name="Attie-Bitach T."/>
            <person name="Johnson C.A."/>
            <person name="Garcia-Verdugo J.M."/>
            <person name="Katsanis N."/>
            <person name="Bergmann C."/>
            <person name="Reiter J.F."/>
        </authorList>
    </citation>
    <scope>IDENTIFICATION IN A COMPLEX WITH MKS1 AND B9D1</scope>
</reference>
<reference key="5">
    <citation type="journal article" date="2012" name="Nat. Cell Biol.">
        <title>A ciliopathy complex at the transition zone protects the cilia as a privileged membrane domain.</title>
        <authorList>
            <person name="Chih B."/>
            <person name="Liu P."/>
            <person name="Chinn Y."/>
            <person name="Chalouni C."/>
            <person name="Komuves L.G."/>
            <person name="Hass P.E."/>
            <person name="Sandoval W."/>
            <person name="Peterson A.S."/>
        </authorList>
    </citation>
    <scope>IDENTIFICATION IN THE TECTONIC-LIKE COMPLEX</scope>
    <scope>FUNCTION</scope>
</reference>
<proteinExistence type="evidence at protein level"/>
<organism>
    <name type="scientific">Mus musculus</name>
    <name type="common">Mouse</name>
    <dbReference type="NCBI Taxonomy" id="10090"/>
    <lineage>
        <taxon>Eukaryota</taxon>
        <taxon>Metazoa</taxon>
        <taxon>Chordata</taxon>
        <taxon>Craniata</taxon>
        <taxon>Vertebrata</taxon>
        <taxon>Euteleostomi</taxon>
        <taxon>Mammalia</taxon>
        <taxon>Eutheria</taxon>
        <taxon>Euarchontoglires</taxon>
        <taxon>Glires</taxon>
        <taxon>Rodentia</taxon>
        <taxon>Myomorpha</taxon>
        <taxon>Muroidea</taxon>
        <taxon>Muridae</taxon>
        <taxon>Murinae</taxon>
        <taxon>Mus</taxon>
        <taxon>Mus</taxon>
    </lineage>
</organism>
<feature type="chain" id="PRO_0000307675" description="B9 domain-containing protein 2">
    <location>
        <begin position="1"/>
        <end position="175"/>
    </location>
</feature>
<feature type="domain" description="C2 B9-type" evidence="1">
    <location>
        <begin position="2"/>
        <end position="118"/>
    </location>
</feature>
<feature type="sequence conflict" description="In Ref. 1; BAE26994." evidence="5" ref="1">
    <original>H</original>
    <variation>N</variation>
    <location>
        <position position="167"/>
    </location>
</feature>
<sequence>MAEVHVIGQIIGATGFSESSLFCKWGIHTGAAWKLLSGVREGQTQVDTPQIGDMAYWSHPIDLHFATKGLQGWPRLHLQVWSQDSFGRCQLAGYGFCHVPSSPGTHQLDCPTWRPLGSWREQLARAFVGGGPQLLHADTIYSGADRYRLHTAAGGTVHLGIGLLLRHFDRYGVEC</sequence>
<name>B9D2_MOUSE</name>
<gene>
    <name type="primary">B9d2</name>
</gene>
<accession>Q3UK10</accession>
<accession>Q8R045</accession>
<dbReference type="EMBL" id="AK141500">
    <property type="protein sequence ID" value="BAE24704.1"/>
    <property type="molecule type" value="mRNA"/>
</dbReference>
<dbReference type="EMBL" id="AK146227">
    <property type="protein sequence ID" value="BAE26994.1"/>
    <property type="molecule type" value="mRNA"/>
</dbReference>
<dbReference type="EMBL" id="BC028440">
    <property type="protein sequence ID" value="AAH28440.1"/>
    <property type="molecule type" value="mRNA"/>
</dbReference>
<dbReference type="CCDS" id="CCDS20992.1"/>
<dbReference type="RefSeq" id="NP_001349083.1">
    <property type="nucleotide sequence ID" value="NM_001362154.1"/>
</dbReference>
<dbReference type="RefSeq" id="NP_742160.1">
    <property type="nucleotide sequence ID" value="NM_172148.2"/>
</dbReference>
<dbReference type="RefSeq" id="XP_006539917.1">
    <property type="nucleotide sequence ID" value="XM_006539854.3"/>
</dbReference>
<dbReference type="CORUM" id="Q3UK10"/>
<dbReference type="DIP" id="DIP-29732N"/>
<dbReference type="FunCoup" id="Q3UK10">
    <property type="interactions" value="221"/>
</dbReference>
<dbReference type="IntAct" id="Q3UK10">
    <property type="interactions" value="9"/>
</dbReference>
<dbReference type="STRING" id="10090.ENSMUSP00000104040"/>
<dbReference type="PaxDb" id="10090-ENSMUSP00000104040"/>
<dbReference type="PeptideAtlas" id="Q3UK10"/>
<dbReference type="ProteomicsDB" id="277156"/>
<dbReference type="Pumba" id="Q3UK10"/>
<dbReference type="Antibodypedia" id="48740">
    <property type="antibodies" value="34 antibodies from 13 providers"/>
</dbReference>
<dbReference type="Ensembl" id="ENSMUST00000108403.4">
    <property type="protein sequence ID" value="ENSMUSP00000104040.4"/>
    <property type="gene ID" value="ENSMUSG00000063439.8"/>
</dbReference>
<dbReference type="Ensembl" id="ENSMUST00000205658.2">
    <property type="protein sequence ID" value="ENSMUSP00000146289.2"/>
    <property type="gene ID" value="ENSMUSG00000063439.8"/>
</dbReference>
<dbReference type="GeneID" id="232987"/>
<dbReference type="KEGG" id="mmu:232987"/>
<dbReference type="UCSC" id="uc009fto.1">
    <property type="organism name" value="mouse"/>
</dbReference>
<dbReference type="AGR" id="MGI:2387643"/>
<dbReference type="CTD" id="80776"/>
<dbReference type="MGI" id="MGI:2387643">
    <property type="gene designation" value="B9d2"/>
</dbReference>
<dbReference type="VEuPathDB" id="HostDB:ENSMUSG00000063439"/>
<dbReference type="eggNOG" id="KOG4028">
    <property type="taxonomic scope" value="Eukaryota"/>
</dbReference>
<dbReference type="GeneTree" id="ENSGT00940000161428"/>
<dbReference type="HOGENOM" id="CLU_084934_2_1_1"/>
<dbReference type="InParanoid" id="Q3UK10"/>
<dbReference type="OMA" id="DVAYWCH"/>
<dbReference type="OrthoDB" id="184109at2759"/>
<dbReference type="PhylomeDB" id="Q3UK10"/>
<dbReference type="TreeFam" id="TF314883"/>
<dbReference type="Reactome" id="R-MMU-141444">
    <property type="pathway name" value="Amplification of signal from unattached kinetochores via a MAD2 inhibitory signal"/>
</dbReference>
<dbReference type="Reactome" id="R-MMU-2467813">
    <property type="pathway name" value="Separation of Sister Chromatids"/>
</dbReference>
<dbReference type="Reactome" id="R-MMU-2500257">
    <property type="pathway name" value="Resolution of Sister Chromatid Cohesion"/>
</dbReference>
<dbReference type="Reactome" id="R-MMU-5620912">
    <property type="pathway name" value="Anchoring of the basal body to the plasma membrane"/>
</dbReference>
<dbReference type="Reactome" id="R-MMU-5663220">
    <property type="pathway name" value="RHO GTPases Activate Formins"/>
</dbReference>
<dbReference type="Reactome" id="R-MMU-68877">
    <property type="pathway name" value="Mitotic Prometaphase"/>
</dbReference>
<dbReference type="Reactome" id="R-MMU-9648025">
    <property type="pathway name" value="EML4 and NUDC in mitotic spindle formation"/>
</dbReference>
<dbReference type="BioGRID-ORCS" id="232987">
    <property type="hits" value="5 hits in 77 CRISPR screens"/>
</dbReference>
<dbReference type="PRO" id="PR:Q3UK10"/>
<dbReference type="Proteomes" id="UP000000589">
    <property type="component" value="Chromosome 7"/>
</dbReference>
<dbReference type="RNAct" id="Q3UK10">
    <property type="molecule type" value="protein"/>
</dbReference>
<dbReference type="Bgee" id="ENSMUSG00000063439">
    <property type="expression patterns" value="Expressed in bone marrow and 66 other cell types or tissues"/>
</dbReference>
<dbReference type="ExpressionAtlas" id="Q3UK10">
    <property type="expression patterns" value="baseline and differential"/>
</dbReference>
<dbReference type="GO" id="GO:0005813">
    <property type="term" value="C:centrosome"/>
    <property type="evidence" value="ECO:0007669"/>
    <property type="project" value="Ensembl"/>
</dbReference>
<dbReference type="GO" id="GO:0036064">
    <property type="term" value="C:ciliary basal body"/>
    <property type="evidence" value="ECO:0007669"/>
    <property type="project" value="Ensembl"/>
</dbReference>
<dbReference type="GO" id="GO:0005737">
    <property type="term" value="C:cytoplasm"/>
    <property type="evidence" value="ECO:0007669"/>
    <property type="project" value="UniProtKB-KW"/>
</dbReference>
<dbReference type="GO" id="GO:0016020">
    <property type="term" value="C:membrane"/>
    <property type="evidence" value="ECO:0000314"/>
    <property type="project" value="MGI"/>
</dbReference>
<dbReference type="GO" id="GO:0036038">
    <property type="term" value="C:MKS complex"/>
    <property type="evidence" value="ECO:0000314"/>
    <property type="project" value="UniProtKB"/>
</dbReference>
<dbReference type="GO" id="GO:0005634">
    <property type="term" value="C:nucleus"/>
    <property type="evidence" value="ECO:0007669"/>
    <property type="project" value="UniProtKB-SubCell"/>
</dbReference>
<dbReference type="GO" id="GO:0043015">
    <property type="term" value="F:gamma-tubulin binding"/>
    <property type="evidence" value="ECO:0000314"/>
    <property type="project" value="UniProtKB"/>
</dbReference>
<dbReference type="GO" id="GO:0060271">
    <property type="term" value="P:cilium assembly"/>
    <property type="evidence" value="ECO:0000315"/>
    <property type="project" value="UniProtKB"/>
</dbReference>
<dbReference type="InterPro" id="IPR010796">
    <property type="entry name" value="C2_B9-type_dom"/>
</dbReference>
<dbReference type="PANTHER" id="PTHR12968">
    <property type="entry name" value="B9 DOMAIN-CONTAINING"/>
    <property type="match status" value="1"/>
</dbReference>
<dbReference type="PANTHER" id="PTHR12968:SF2">
    <property type="entry name" value="B9 DOMAIN-CONTAINING PROTEIN 2"/>
    <property type="match status" value="1"/>
</dbReference>
<dbReference type="Pfam" id="PF07162">
    <property type="entry name" value="B9-C2"/>
    <property type="match status" value="1"/>
</dbReference>
<dbReference type="PROSITE" id="PS51381">
    <property type="entry name" value="C2_B9"/>
    <property type="match status" value="1"/>
</dbReference>
<keyword id="KW-0966">Cell projection</keyword>
<keyword id="KW-0969">Cilium</keyword>
<keyword id="KW-0970">Cilium biogenesis/degradation</keyword>
<keyword id="KW-0963">Cytoplasm</keyword>
<keyword id="KW-0206">Cytoskeleton</keyword>
<keyword id="KW-0539">Nucleus</keyword>
<keyword id="KW-1185">Reference proteome</keyword>
<protein>
    <recommendedName>
        <fullName>B9 domain-containing protein 2</fullName>
    </recommendedName>
    <alternativeName>
        <fullName>Stumpy</fullName>
    </alternativeName>
</protein>
<evidence type="ECO:0000255" key="1">
    <source>
        <dbReference type="PROSITE-ProRule" id="PRU00713"/>
    </source>
</evidence>
<evidence type="ECO:0000269" key="2">
    <source>
    </source>
</evidence>
<evidence type="ECO:0000269" key="3">
    <source>
    </source>
</evidence>
<evidence type="ECO:0000269" key="4">
    <source>
    </source>
</evidence>
<evidence type="ECO:0000305" key="5"/>
<comment type="function">
    <text evidence="2 4">Component of the tectonic-like complex, a complex localized at the transition zone of primary cilia and acting as a barrier that prevents diffusion of transmembrane proteins between the cilia and plasma membranes.</text>
</comment>
<comment type="subunit">
    <text evidence="2 3 4">Part of the tectonic-like complex (also named B9 complex). Interacts with TUBG1.</text>
</comment>
<comment type="interaction">
    <interactant intactId="EBI-5652008">
        <id>Q3UK10</id>
    </interactant>
    <interactant intactId="EBI-5652050">
        <id>Q9R1S0</id>
        <label>B9d1</label>
    </interactant>
    <organismsDiffer>false</organismsDiffer>
    <experiments>5</experiments>
</comment>
<comment type="interaction">
    <interactant intactId="EBI-5652008">
        <id>Q3UK10</id>
    </interactant>
    <interactant intactId="EBI-4281059">
        <id>Q5SW45</id>
        <label>Mks1</label>
    </interactant>
    <organismsDiffer>false</organismsDiffer>
    <experiments>3</experiments>
</comment>
<comment type="subcellular location">
    <subcellularLocation>
        <location evidence="2">Cytoplasm</location>
        <location evidence="2">Cytoskeleton</location>
        <location evidence="2">Cilium basal body</location>
    </subcellularLocation>
    <subcellularLocation>
        <location evidence="2">Cytoplasm</location>
        <location evidence="2">Cytoskeleton</location>
        <location evidence="2">Cilium axoneme</location>
    </subcellularLocation>
    <subcellularLocation>
        <location evidence="2">Nucleus</location>
    </subcellularLocation>
</comment>
<comment type="tissue specificity">
    <text evidence="2">Highest expression in thymus and skeletal muscle. Also expressed in spleen, kidney, lung, heart, microglia and liver. Detected in brain (at protein level).</text>
</comment>
<comment type="disruption phenotype">
    <text evidence="2">Mice expressing reduced levels of the protein in the central nervous system and kidney develop perinatal triventricular hydrocephaly, polycystic kidney disease, lack functional intact cilia and die at the time of weaning.</text>
</comment>
<comment type="similarity">
    <text evidence="5">Belongs to the B9D family.</text>
</comment>